<protein>
    <recommendedName>
        <fullName evidence="1">NADPH-dependent 7-cyano-7-deazaguanine reductase</fullName>
        <ecNumber evidence="1">1.7.1.13</ecNumber>
    </recommendedName>
    <alternativeName>
        <fullName evidence="1">7-cyano-7-carbaguanine reductase</fullName>
    </alternativeName>
    <alternativeName>
        <fullName evidence="1">NADPH-dependent nitrile oxidoreductase</fullName>
    </alternativeName>
    <alternativeName>
        <fullName evidence="1">PreQ(0) reductase</fullName>
    </alternativeName>
</protein>
<reference key="1">
    <citation type="journal article" date="2006" name="Proc. Natl. Acad. Sci. U.S.A.">
        <title>The partitioned Rhizobium etli genome: genetic and metabolic redundancy in seven interacting replicons.</title>
        <authorList>
            <person name="Gonzalez V."/>
            <person name="Santamaria R.I."/>
            <person name="Bustos P."/>
            <person name="Hernandez-Gonzalez I."/>
            <person name="Medrano-Soto A."/>
            <person name="Moreno-Hagelsieb G."/>
            <person name="Janga S.C."/>
            <person name="Ramirez M.A."/>
            <person name="Jimenez-Jacinto V."/>
            <person name="Collado-Vides J."/>
            <person name="Davila G."/>
        </authorList>
    </citation>
    <scope>NUCLEOTIDE SEQUENCE [LARGE SCALE GENOMIC DNA]</scope>
    <source>
        <strain>ATCC 51251 / DSM 11541 / JCM 21823 / NBRC 15573 / CFN 42</strain>
    </source>
</reference>
<sequence>MPNTDVSSLSMLGHQTETASSPEEAVLEKVPSNHAGTDYVVRFTAPEFTSLCPMTGQPDFAHIVIDYIPGEWLVESKSLKLFLHSFRNHGAFHEDCSIYIAKRIVELLDPKWLRIGAYWYPRGGIPIDVFWQTGKPPEGVWLPEQGVATYRGRG</sequence>
<name>QUEF_RHIEC</name>
<proteinExistence type="inferred from homology"/>
<keyword id="KW-0963">Cytoplasm</keyword>
<keyword id="KW-0521">NADP</keyword>
<keyword id="KW-0560">Oxidoreductase</keyword>
<keyword id="KW-0671">Queuosine biosynthesis</keyword>
<keyword id="KW-1185">Reference proteome</keyword>
<accession>Q2K5P8</accession>
<dbReference type="EC" id="1.7.1.13" evidence="1"/>
<dbReference type="EMBL" id="CP000133">
    <property type="protein sequence ID" value="ABC91838.1"/>
    <property type="molecule type" value="Genomic_DNA"/>
</dbReference>
<dbReference type="RefSeq" id="WP_011426308.1">
    <property type="nucleotide sequence ID" value="NC_007761.1"/>
</dbReference>
<dbReference type="SMR" id="Q2K5P8"/>
<dbReference type="KEGG" id="ret:RHE_CH03071"/>
<dbReference type="eggNOG" id="COG0780">
    <property type="taxonomic scope" value="Bacteria"/>
</dbReference>
<dbReference type="HOGENOM" id="CLU_102489_0_1_5"/>
<dbReference type="OrthoDB" id="9789995at2"/>
<dbReference type="UniPathway" id="UPA00392"/>
<dbReference type="Proteomes" id="UP000001936">
    <property type="component" value="Chromosome"/>
</dbReference>
<dbReference type="GO" id="GO:0005737">
    <property type="term" value="C:cytoplasm"/>
    <property type="evidence" value="ECO:0007669"/>
    <property type="project" value="UniProtKB-SubCell"/>
</dbReference>
<dbReference type="GO" id="GO:0033739">
    <property type="term" value="F:preQ1 synthase activity"/>
    <property type="evidence" value="ECO:0007669"/>
    <property type="project" value="UniProtKB-UniRule"/>
</dbReference>
<dbReference type="GO" id="GO:0008616">
    <property type="term" value="P:queuosine biosynthetic process"/>
    <property type="evidence" value="ECO:0007669"/>
    <property type="project" value="UniProtKB-UniRule"/>
</dbReference>
<dbReference type="GO" id="GO:0006400">
    <property type="term" value="P:tRNA modification"/>
    <property type="evidence" value="ECO:0007669"/>
    <property type="project" value="UniProtKB-UniRule"/>
</dbReference>
<dbReference type="Gene3D" id="3.30.1130.10">
    <property type="match status" value="1"/>
</dbReference>
<dbReference type="HAMAP" id="MF_00818">
    <property type="entry name" value="QueF_type1"/>
    <property type="match status" value="1"/>
</dbReference>
<dbReference type="InterPro" id="IPR043133">
    <property type="entry name" value="GTP-CH-I_C/QueF"/>
</dbReference>
<dbReference type="InterPro" id="IPR050084">
    <property type="entry name" value="NADPH_dep_7-cyano-7-deazaG_red"/>
</dbReference>
<dbReference type="InterPro" id="IPR029500">
    <property type="entry name" value="QueF"/>
</dbReference>
<dbReference type="InterPro" id="IPR016856">
    <property type="entry name" value="QueF_type1"/>
</dbReference>
<dbReference type="NCBIfam" id="TIGR03139">
    <property type="entry name" value="QueF-II"/>
    <property type="match status" value="1"/>
</dbReference>
<dbReference type="PANTHER" id="PTHR34354">
    <property type="entry name" value="NADPH-DEPENDENT 7-CYANO-7-DEAZAGUANINE REDUCTASE"/>
    <property type="match status" value="1"/>
</dbReference>
<dbReference type="PANTHER" id="PTHR34354:SF1">
    <property type="entry name" value="NADPH-DEPENDENT 7-CYANO-7-DEAZAGUANINE REDUCTASE"/>
    <property type="match status" value="1"/>
</dbReference>
<dbReference type="Pfam" id="PF14489">
    <property type="entry name" value="QueF"/>
    <property type="match status" value="1"/>
</dbReference>
<dbReference type="PIRSF" id="PIRSF027377">
    <property type="entry name" value="Nitrile_oxidored_QueF"/>
    <property type="match status" value="1"/>
</dbReference>
<dbReference type="SUPFAM" id="SSF55620">
    <property type="entry name" value="Tetrahydrobiopterin biosynthesis enzymes-like"/>
    <property type="match status" value="1"/>
</dbReference>
<evidence type="ECO:0000255" key="1">
    <source>
        <dbReference type="HAMAP-Rule" id="MF_00818"/>
    </source>
</evidence>
<evidence type="ECO:0000256" key="2">
    <source>
        <dbReference type="SAM" id="MobiDB-lite"/>
    </source>
</evidence>
<gene>
    <name evidence="1" type="primary">queF</name>
    <name type="ordered locus">RHE_CH03071</name>
</gene>
<feature type="chain" id="PRO_0000247690" description="NADPH-dependent 7-cyano-7-deazaguanine reductase">
    <location>
        <begin position="1"/>
        <end position="154"/>
    </location>
</feature>
<feature type="region of interest" description="Disordered" evidence="2">
    <location>
        <begin position="1"/>
        <end position="26"/>
    </location>
</feature>
<feature type="compositionally biased region" description="Polar residues" evidence="2">
    <location>
        <begin position="1"/>
        <end position="21"/>
    </location>
</feature>
<feature type="active site" description="Thioimide intermediate" evidence="1">
    <location>
        <position position="52"/>
    </location>
</feature>
<feature type="active site" description="Proton donor" evidence="1">
    <location>
        <position position="59"/>
    </location>
</feature>
<feature type="binding site" evidence="1">
    <location>
        <begin position="74"/>
        <end position="76"/>
    </location>
    <ligand>
        <name>substrate</name>
    </ligand>
</feature>
<feature type="binding site" evidence="1">
    <location>
        <begin position="93"/>
        <end position="94"/>
    </location>
    <ligand>
        <name>substrate</name>
    </ligand>
</feature>
<organism>
    <name type="scientific">Rhizobium etli (strain ATCC 51251 / DSM 11541 / JCM 21823 / NBRC 15573 / CFN 42)</name>
    <dbReference type="NCBI Taxonomy" id="347834"/>
    <lineage>
        <taxon>Bacteria</taxon>
        <taxon>Pseudomonadati</taxon>
        <taxon>Pseudomonadota</taxon>
        <taxon>Alphaproteobacteria</taxon>
        <taxon>Hyphomicrobiales</taxon>
        <taxon>Rhizobiaceae</taxon>
        <taxon>Rhizobium/Agrobacterium group</taxon>
        <taxon>Rhizobium</taxon>
    </lineage>
</organism>
<comment type="function">
    <text evidence="1">Catalyzes the NADPH-dependent reduction of 7-cyano-7-deazaguanine (preQ0) to 7-aminomethyl-7-deazaguanine (preQ1).</text>
</comment>
<comment type="catalytic activity">
    <reaction evidence="1">
        <text>7-aminomethyl-7-carbaguanine + 2 NADP(+) = 7-cyano-7-deazaguanine + 2 NADPH + 3 H(+)</text>
        <dbReference type="Rhea" id="RHEA:13409"/>
        <dbReference type="ChEBI" id="CHEBI:15378"/>
        <dbReference type="ChEBI" id="CHEBI:45075"/>
        <dbReference type="ChEBI" id="CHEBI:57783"/>
        <dbReference type="ChEBI" id="CHEBI:58349"/>
        <dbReference type="ChEBI" id="CHEBI:58703"/>
        <dbReference type="EC" id="1.7.1.13"/>
    </reaction>
</comment>
<comment type="pathway">
    <text evidence="1">tRNA modification; tRNA-queuosine biosynthesis.</text>
</comment>
<comment type="subcellular location">
    <subcellularLocation>
        <location evidence="1">Cytoplasm</location>
    </subcellularLocation>
</comment>
<comment type="similarity">
    <text evidence="1">Belongs to the GTP cyclohydrolase I family. QueF type 1 subfamily.</text>
</comment>